<reference key="1">
    <citation type="journal article" date="2002" name="Environ. Microbiol.">
        <title>Complete genome sequence and comparative analysis of the metabolically versatile Pseudomonas putida KT2440.</title>
        <authorList>
            <person name="Nelson K.E."/>
            <person name="Weinel C."/>
            <person name="Paulsen I.T."/>
            <person name="Dodson R.J."/>
            <person name="Hilbert H."/>
            <person name="Martins dos Santos V.A.P."/>
            <person name="Fouts D.E."/>
            <person name="Gill S.R."/>
            <person name="Pop M."/>
            <person name="Holmes M."/>
            <person name="Brinkac L.M."/>
            <person name="Beanan M.J."/>
            <person name="DeBoy R.T."/>
            <person name="Daugherty S.C."/>
            <person name="Kolonay J.F."/>
            <person name="Madupu R."/>
            <person name="Nelson W.C."/>
            <person name="White O."/>
            <person name="Peterson J.D."/>
            <person name="Khouri H.M."/>
            <person name="Hance I."/>
            <person name="Chris Lee P."/>
            <person name="Holtzapple E.K."/>
            <person name="Scanlan D."/>
            <person name="Tran K."/>
            <person name="Moazzez A."/>
            <person name="Utterback T.R."/>
            <person name="Rizzo M."/>
            <person name="Lee K."/>
            <person name="Kosack D."/>
            <person name="Moestl D."/>
            <person name="Wedler H."/>
            <person name="Lauber J."/>
            <person name="Stjepandic D."/>
            <person name="Hoheisel J."/>
            <person name="Straetz M."/>
            <person name="Heim S."/>
            <person name="Kiewitz C."/>
            <person name="Eisen J.A."/>
            <person name="Timmis K.N."/>
            <person name="Duesterhoeft A."/>
            <person name="Tuemmler B."/>
            <person name="Fraser C.M."/>
        </authorList>
    </citation>
    <scope>NUCLEOTIDE SEQUENCE [LARGE SCALE GENOMIC DNA]</scope>
    <source>
        <strain>ATCC 47054 / DSM 6125 / CFBP 8728 / NCIMB 11950 / KT2440</strain>
    </source>
</reference>
<protein>
    <recommendedName>
        <fullName evidence="1">NADH-quinone oxidoreductase subunit K</fullName>
        <ecNumber evidence="1">7.1.1.-</ecNumber>
    </recommendedName>
    <alternativeName>
        <fullName evidence="1">NADH dehydrogenase I subunit K</fullName>
    </alternativeName>
    <alternativeName>
        <fullName evidence="1">NDH-1 subunit K</fullName>
    </alternativeName>
</protein>
<comment type="function">
    <text evidence="1">NDH-1 shuttles electrons from NADH, via FMN and iron-sulfur (Fe-S) centers, to quinones in the respiratory chain. The immediate electron acceptor for the enzyme in this species is believed to be ubiquinone. Couples the redox reaction to proton translocation (for every two electrons transferred, four hydrogen ions are translocated across the cytoplasmic membrane), and thus conserves the redox energy in a proton gradient.</text>
</comment>
<comment type="catalytic activity">
    <reaction evidence="1">
        <text>a quinone + NADH + 5 H(+)(in) = a quinol + NAD(+) + 4 H(+)(out)</text>
        <dbReference type="Rhea" id="RHEA:57888"/>
        <dbReference type="ChEBI" id="CHEBI:15378"/>
        <dbReference type="ChEBI" id="CHEBI:24646"/>
        <dbReference type="ChEBI" id="CHEBI:57540"/>
        <dbReference type="ChEBI" id="CHEBI:57945"/>
        <dbReference type="ChEBI" id="CHEBI:132124"/>
    </reaction>
</comment>
<comment type="subunit">
    <text evidence="1">NDH-1 is composed of 13 different subunits. Subunits NuoA, H, J, K, L, M, N constitute the membrane sector of the complex.</text>
</comment>
<comment type="subcellular location">
    <subcellularLocation>
        <location evidence="1">Cell inner membrane</location>
        <topology evidence="1">Multi-pass membrane protein</topology>
    </subcellularLocation>
</comment>
<comment type="similarity">
    <text evidence="1">Belongs to the complex I subunit 4L family.</text>
</comment>
<keyword id="KW-0997">Cell inner membrane</keyword>
<keyword id="KW-1003">Cell membrane</keyword>
<keyword id="KW-0472">Membrane</keyword>
<keyword id="KW-0520">NAD</keyword>
<keyword id="KW-0874">Quinone</keyword>
<keyword id="KW-1185">Reference proteome</keyword>
<keyword id="KW-1278">Translocase</keyword>
<keyword id="KW-0812">Transmembrane</keyword>
<keyword id="KW-1133">Transmembrane helix</keyword>
<keyword id="KW-0813">Transport</keyword>
<keyword id="KW-0830">Ubiquinone</keyword>
<dbReference type="EC" id="7.1.1.-" evidence="1"/>
<dbReference type="EMBL" id="AE015451">
    <property type="protein sequence ID" value="AAN69711.1"/>
    <property type="molecule type" value="Genomic_DNA"/>
</dbReference>
<dbReference type="RefSeq" id="NP_746247.1">
    <property type="nucleotide sequence ID" value="NC_002947.4"/>
</dbReference>
<dbReference type="RefSeq" id="WP_003251446.1">
    <property type="nucleotide sequence ID" value="NZ_CP169744.1"/>
</dbReference>
<dbReference type="SMR" id="Q88FG8"/>
<dbReference type="STRING" id="160488.PP_4128"/>
<dbReference type="PaxDb" id="160488-PP_4128"/>
<dbReference type="GeneID" id="97169079"/>
<dbReference type="KEGG" id="ppu:PP_4128"/>
<dbReference type="PATRIC" id="fig|160488.4.peg.4387"/>
<dbReference type="eggNOG" id="COG0713">
    <property type="taxonomic scope" value="Bacteria"/>
</dbReference>
<dbReference type="HOGENOM" id="CLU_144724_0_1_6"/>
<dbReference type="OrthoDB" id="9801357at2"/>
<dbReference type="PhylomeDB" id="Q88FG8"/>
<dbReference type="BioCyc" id="MetaCyc:G1G01-4395-MONOMER"/>
<dbReference type="BioCyc" id="PPUT160488:G1G01-4395-MONOMER"/>
<dbReference type="Proteomes" id="UP000000556">
    <property type="component" value="Chromosome"/>
</dbReference>
<dbReference type="GO" id="GO:0030964">
    <property type="term" value="C:NADH dehydrogenase complex"/>
    <property type="evidence" value="ECO:0007669"/>
    <property type="project" value="TreeGrafter"/>
</dbReference>
<dbReference type="GO" id="GO:0005886">
    <property type="term" value="C:plasma membrane"/>
    <property type="evidence" value="ECO:0007669"/>
    <property type="project" value="UniProtKB-SubCell"/>
</dbReference>
<dbReference type="GO" id="GO:0050136">
    <property type="term" value="F:NADH:ubiquinone reductase (non-electrogenic) activity"/>
    <property type="evidence" value="ECO:0007669"/>
    <property type="project" value="UniProtKB-UniRule"/>
</dbReference>
<dbReference type="GO" id="GO:0048038">
    <property type="term" value="F:quinone binding"/>
    <property type="evidence" value="ECO:0007669"/>
    <property type="project" value="UniProtKB-KW"/>
</dbReference>
<dbReference type="GO" id="GO:0042773">
    <property type="term" value="P:ATP synthesis coupled electron transport"/>
    <property type="evidence" value="ECO:0007669"/>
    <property type="project" value="InterPro"/>
</dbReference>
<dbReference type="FunFam" id="1.10.287.3510:FF:000001">
    <property type="entry name" value="NADH-quinone oxidoreductase subunit K"/>
    <property type="match status" value="1"/>
</dbReference>
<dbReference type="Gene3D" id="1.10.287.3510">
    <property type="match status" value="1"/>
</dbReference>
<dbReference type="HAMAP" id="MF_01456">
    <property type="entry name" value="NDH1_NuoK"/>
    <property type="match status" value="1"/>
</dbReference>
<dbReference type="InterPro" id="IPR001133">
    <property type="entry name" value="NADH_UbQ_OxRdtase_chain4L/K"/>
</dbReference>
<dbReference type="InterPro" id="IPR039428">
    <property type="entry name" value="NUOK/Mnh_C1-like"/>
</dbReference>
<dbReference type="NCBIfam" id="NF004319">
    <property type="entry name" value="PRK05715.1-1"/>
    <property type="match status" value="1"/>
</dbReference>
<dbReference type="NCBIfam" id="NF004320">
    <property type="entry name" value="PRK05715.1-2"/>
    <property type="match status" value="1"/>
</dbReference>
<dbReference type="PANTHER" id="PTHR11434:SF16">
    <property type="entry name" value="NADH-UBIQUINONE OXIDOREDUCTASE CHAIN 4L"/>
    <property type="match status" value="1"/>
</dbReference>
<dbReference type="PANTHER" id="PTHR11434">
    <property type="entry name" value="NADH-UBIQUINONE OXIDOREDUCTASE SUBUNIT ND4L"/>
    <property type="match status" value="1"/>
</dbReference>
<dbReference type="Pfam" id="PF00420">
    <property type="entry name" value="Oxidored_q2"/>
    <property type="match status" value="1"/>
</dbReference>
<name>NUOK_PSEPK</name>
<sequence>MGAIPLEHGLAVAGILFCLGLVGLMVRRNILFVLMSLEVMMNASALAFVVAGARWVQPDGQVMFILVISLAAAEASIGLAILLQLYRRFHTLDIDAASEMRG</sequence>
<proteinExistence type="inferred from homology"/>
<evidence type="ECO:0000255" key="1">
    <source>
        <dbReference type="HAMAP-Rule" id="MF_01456"/>
    </source>
</evidence>
<accession>Q88FG8</accession>
<organism>
    <name type="scientific">Pseudomonas putida (strain ATCC 47054 / DSM 6125 / CFBP 8728 / NCIMB 11950 / KT2440)</name>
    <dbReference type="NCBI Taxonomy" id="160488"/>
    <lineage>
        <taxon>Bacteria</taxon>
        <taxon>Pseudomonadati</taxon>
        <taxon>Pseudomonadota</taxon>
        <taxon>Gammaproteobacteria</taxon>
        <taxon>Pseudomonadales</taxon>
        <taxon>Pseudomonadaceae</taxon>
        <taxon>Pseudomonas</taxon>
    </lineage>
</organism>
<gene>
    <name evidence="1" type="primary">nuoK</name>
    <name type="ordered locus">PP_4128</name>
</gene>
<feature type="chain" id="PRO_0000390173" description="NADH-quinone oxidoreductase subunit K">
    <location>
        <begin position="1"/>
        <end position="102"/>
    </location>
</feature>
<feature type="transmembrane region" description="Helical" evidence="1">
    <location>
        <begin position="6"/>
        <end position="26"/>
    </location>
</feature>
<feature type="transmembrane region" description="Helical" evidence="1">
    <location>
        <begin position="30"/>
        <end position="50"/>
    </location>
</feature>
<feature type="transmembrane region" description="Helical" evidence="1">
    <location>
        <begin position="62"/>
        <end position="82"/>
    </location>
</feature>